<gene>
    <name evidence="1" type="primary">rsmG</name>
    <name type="ordered locus">VCM66_2694</name>
</gene>
<proteinExistence type="inferred from homology"/>
<keyword id="KW-0963">Cytoplasm</keyword>
<keyword id="KW-0489">Methyltransferase</keyword>
<keyword id="KW-0698">rRNA processing</keyword>
<keyword id="KW-0949">S-adenosyl-L-methionine</keyword>
<keyword id="KW-0808">Transferase</keyword>
<organism>
    <name type="scientific">Vibrio cholerae serotype O1 (strain M66-2)</name>
    <dbReference type="NCBI Taxonomy" id="579112"/>
    <lineage>
        <taxon>Bacteria</taxon>
        <taxon>Pseudomonadati</taxon>
        <taxon>Pseudomonadota</taxon>
        <taxon>Gammaproteobacteria</taxon>
        <taxon>Vibrionales</taxon>
        <taxon>Vibrionaceae</taxon>
        <taxon>Vibrio</taxon>
    </lineage>
</organism>
<feature type="chain" id="PRO_1000118207" description="Ribosomal RNA small subunit methyltransferase G">
    <location>
        <begin position="1"/>
        <end position="210"/>
    </location>
</feature>
<feature type="binding site" evidence="1">
    <location>
        <position position="76"/>
    </location>
    <ligand>
        <name>S-adenosyl-L-methionine</name>
        <dbReference type="ChEBI" id="CHEBI:59789"/>
    </ligand>
</feature>
<feature type="binding site" evidence="1">
    <location>
        <position position="81"/>
    </location>
    <ligand>
        <name>S-adenosyl-L-methionine</name>
        <dbReference type="ChEBI" id="CHEBI:59789"/>
    </ligand>
</feature>
<feature type="binding site" evidence="1">
    <location>
        <begin position="127"/>
        <end position="128"/>
    </location>
    <ligand>
        <name>S-adenosyl-L-methionine</name>
        <dbReference type="ChEBI" id="CHEBI:59789"/>
    </ligand>
</feature>
<feature type="binding site" evidence="1">
    <location>
        <position position="142"/>
    </location>
    <ligand>
        <name>S-adenosyl-L-methionine</name>
        <dbReference type="ChEBI" id="CHEBI:59789"/>
    </ligand>
</feature>
<protein>
    <recommendedName>
        <fullName evidence="1">Ribosomal RNA small subunit methyltransferase G</fullName>
        <ecNumber evidence="1">2.1.1.170</ecNumber>
    </recommendedName>
    <alternativeName>
        <fullName evidence="1">16S rRNA 7-methylguanosine methyltransferase</fullName>
        <shortName evidence="1">16S rRNA m7G methyltransferase</shortName>
    </alternativeName>
</protein>
<accession>C3LSJ9</accession>
<reference key="1">
    <citation type="journal article" date="2008" name="PLoS ONE">
        <title>A recalibrated molecular clock and independent origins for the cholera pandemic clones.</title>
        <authorList>
            <person name="Feng L."/>
            <person name="Reeves P.R."/>
            <person name="Lan R."/>
            <person name="Ren Y."/>
            <person name="Gao C."/>
            <person name="Zhou Z."/>
            <person name="Ren Y."/>
            <person name="Cheng J."/>
            <person name="Wang W."/>
            <person name="Wang J."/>
            <person name="Qian W."/>
            <person name="Li D."/>
            <person name="Wang L."/>
        </authorList>
    </citation>
    <scope>NUCLEOTIDE SEQUENCE [LARGE SCALE GENOMIC DNA]</scope>
    <source>
        <strain>M66-2</strain>
    </source>
</reference>
<name>RSMG_VIBCM</name>
<sequence length="210" mass="23578">MNPLRVKLDALISKTSLTVTEQQREQLVGYVQLLDKWNKAYNLTSVRDPMEMLVKHILDSLVVSPHLVGERFIDVGSGPGLPGIPLAIMHPDKEFVLIDSLGKRIRFLKQVIHDLKINNVLPVQSRVEEFDPESGFDGVLSRAFASMTDMVNWCQHLPKPNAGVFLALKGVRPDDEITLLPEWCSVTDIKALQVPELEGERHLVILSRKG</sequence>
<dbReference type="EC" id="2.1.1.170" evidence="1"/>
<dbReference type="EMBL" id="CP001233">
    <property type="protein sequence ID" value="ACP06986.1"/>
    <property type="molecule type" value="Genomic_DNA"/>
</dbReference>
<dbReference type="RefSeq" id="WP_001068941.1">
    <property type="nucleotide sequence ID" value="NC_012578.1"/>
</dbReference>
<dbReference type="SMR" id="C3LSJ9"/>
<dbReference type="KEGG" id="vcm:VCM66_2694"/>
<dbReference type="HOGENOM" id="CLU_065341_2_0_6"/>
<dbReference type="Proteomes" id="UP000001217">
    <property type="component" value="Chromosome I"/>
</dbReference>
<dbReference type="GO" id="GO:0005829">
    <property type="term" value="C:cytosol"/>
    <property type="evidence" value="ECO:0007669"/>
    <property type="project" value="TreeGrafter"/>
</dbReference>
<dbReference type="GO" id="GO:0070043">
    <property type="term" value="F:rRNA (guanine-N7-)-methyltransferase activity"/>
    <property type="evidence" value="ECO:0007669"/>
    <property type="project" value="UniProtKB-UniRule"/>
</dbReference>
<dbReference type="CDD" id="cd02440">
    <property type="entry name" value="AdoMet_MTases"/>
    <property type="match status" value="1"/>
</dbReference>
<dbReference type="FunFam" id="3.40.50.150:FF:000032">
    <property type="entry name" value="Ribosomal RNA small subunit methyltransferase G"/>
    <property type="match status" value="1"/>
</dbReference>
<dbReference type="Gene3D" id="3.40.50.150">
    <property type="entry name" value="Vaccinia Virus protein VP39"/>
    <property type="match status" value="1"/>
</dbReference>
<dbReference type="HAMAP" id="MF_00074">
    <property type="entry name" value="16SrRNA_methyltr_G"/>
    <property type="match status" value="1"/>
</dbReference>
<dbReference type="InterPro" id="IPR003682">
    <property type="entry name" value="rRNA_ssu_MeTfrase_G"/>
</dbReference>
<dbReference type="InterPro" id="IPR029063">
    <property type="entry name" value="SAM-dependent_MTases_sf"/>
</dbReference>
<dbReference type="NCBIfam" id="TIGR00138">
    <property type="entry name" value="rsmG_gidB"/>
    <property type="match status" value="1"/>
</dbReference>
<dbReference type="PANTHER" id="PTHR31760">
    <property type="entry name" value="S-ADENOSYL-L-METHIONINE-DEPENDENT METHYLTRANSFERASES SUPERFAMILY PROTEIN"/>
    <property type="match status" value="1"/>
</dbReference>
<dbReference type="PANTHER" id="PTHR31760:SF0">
    <property type="entry name" value="S-ADENOSYL-L-METHIONINE-DEPENDENT METHYLTRANSFERASES SUPERFAMILY PROTEIN"/>
    <property type="match status" value="1"/>
</dbReference>
<dbReference type="Pfam" id="PF02527">
    <property type="entry name" value="GidB"/>
    <property type="match status" value="1"/>
</dbReference>
<dbReference type="PIRSF" id="PIRSF003078">
    <property type="entry name" value="GidB"/>
    <property type="match status" value="1"/>
</dbReference>
<dbReference type="SUPFAM" id="SSF53335">
    <property type="entry name" value="S-adenosyl-L-methionine-dependent methyltransferases"/>
    <property type="match status" value="1"/>
</dbReference>
<evidence type="ECO:0000255" key="1">
    <source>
        <dbReference type="HAMAP-Rule" id="MF_00074"/>
    </source>
</evidence>
<comment type="function">
    <text evidence="1">Specifically methylates the N7 position of guanine in position 527 of 16S rRNA.</text>
</comment>
<comment type="catalytic activity">
    <reaction evidence="1">
        <text>guanosine(527) in 16S rRNA + S-adenosyl-L-methionine = N(7)-methylguanosine(527) in 16S rRNA + S-adenosyl-L-homocysteine</text>
        <dbReference type="Rhea" id="RHEA:42732"/>
        <dbReference type="Rhea" id="RHEA-COMP:10209"/>
        <dbReference type="Rhea" id="RHEA-COMP:10210"/>
        <dbReference type="ChEBI" id="CHEBI:57856"/>
        <dbReference type="ChEBI" id="CHEBI:59789"/>
        <dbReference type="ChEBI" id="CHEBI:74269"/>
        <dbReference type="ChEBI" id="CHEBI:74480"/>
        <dbReference type="EC" id="2.1.1.170"/>
    </reaction>
</comment>
<comment type="subcellular location">
    <subcellularLocation>
        <location evidence="1">Cytoplasm</location>
    </subcellularLocation>
</comment>
<comment type="similarity">
    <text evidence="1">Belongs to the methyltransferase superfamily. RNA methyltransferase RsmG family.</text>
</comment>